<protein>
    <recommendedName>
        <fullName evidence="1">Large ribosomal subunit protein uL5</fullName>
    </recommendedName>
    <alternativeName>
        <fullName evidence="2">50S ribosomal protein L5</fullName>
    </alternativeName>
</protein>
<evidence type="ECO:0000255" key="1">
    <source>
        <dbReference type="HAMAP-Rule" id="MF_01333"/>
    </source>
</evidence>
<evidence type="ECO:0000305" key="2"/>
<evidence type="ECO:0007829" key="3">
    <source>
        <dbReference type="PDB" id="4WF9"/>
    </source>
</evidence>
<evidence type="ECO:0007829" key="4">
    <source>
        <dbReference type="PDB" id="4WFA"/>
    </source>
</evidence>
<evidence type="ECO:0007829" key="5">
    <source>
        <dbReference type="PDB" id="4WFB"/>
    </source>
</evidence>
<evidence type="ECO:0007829" key="6">
    <source>
        <dbReference type="PDB" id="5NRG"/>
    </source>
</evidence>
<evidence type="ECO:0007829" key="7">
    <source>
        <dbReference type="PDB" id="6HMA"/>
    </source>
</evidence>
<evidence type="ECO:0007829" key="8">
    <source>
        <dbReference type="PDB" id="7ASM"/>
    </source>
</evidence>
<name>RL5_STAA8</name>
<reference key="1">
    <citation type="book" date="2006" name="Gram positive pathogens, 2nd edition">
        <title>The Staphylococcus aureus NCTC 8325 genome.</title>
        <editorList>
            <person name="Fischetti V."/>
            <person name="Novick R."/>
            <person name="Ferretti J."/>
            <person name="Portnoy D."/>
            <person name="Rood J."/>
        </editorList>
        <authorList>
            <person name="Gillaspy A.F."/>
            <person name="Worrell V."/>
            <person name="Orvis J."/>
            <person name="Roe B.A."/>
            <person name="Dyer D.W."/>
            <person name="Iandolo J.J."/>
        </authorList>
    </citation>
    <scope>NUCLEOTIDE SEQUENCE [LARGE SCALE GENOMIC DNA]</scope>
    <source>
        <strain>NCTC 8325 / PS 47</strain>
    </source>
</reference>
<feature type="chain" id="PRO_1000052837" description="Large ribosomal subunit protein uL5">
    <location>
        <begin position="1"/>
        <end position="179"/>
    </location>
</feature>
<feature type="helix" evidence="4">
    <location>
        <begin position="6"/>
        <end position="17"/>
    </location>
</feature>
<feature type="turn" evidence="5">
    <location>
        <begin position="18"/>
        <end position="21"/>
    </location>
</feature>
<feature type="helix" evidence="4">
    <location>
        <begin position="25"/>
        <end position="27"/>
    </location>
</feature>
<feature type="strand" evidence="8">
    <location>
        <begin position="31"/>
        <end position="37"/>
    </location>
</feature>
<feature type="strand" evidence="4">
    <location>
        <begin position="42"/>
        <end position="44"/>
    </location>
</feature>
<feature type="helix" evidence="8">
    <location>
        <begin position="47"/>
        <end position="60"/>
    </location>
</feature>
<feature type="strand" evidence="8">
    <location>
        <begin position="61"/>
        <end position="63"/>
    </location>
</feature>
<feature type="strand" evidence="6">
    <location>
        <begin position="66"/>
        <end position="69"/>
    </location>
</feature>
<feature type="strand" evidence="7">
    <location>
        <begin position="75"/>
        <end position="78"/>
    </location>
</feature>
<feature type="strand" evidence="8">
    <location>
        <begin position="87"/>
        <end position="91"/>
    </location>
</feature>
<feature type="helix" evidence="8">
    <location>
        <begin position="94"/>
        <end position="111"/>
    </location>
</feature>
<feature type="strand" evidence="7">
    <location>
        <begin position="114"/>
        <end position="117"/>
    </location>
</feature>
<feature type="strand" evidence="3">
    <location>
        <begin position="130"/>
        <end position="133"/>
    </location>
</feature>
<feature type="strand" evidence="8">
    <location>
        <begin position="134"/>
        <end position="138"/>
    </location>
</feature>
<feature type="strand" evidence="7">
    <location>
        <begin position="143"/>
        <end position="145"/>
    </location>
</feature>
<feature type="strand" evidence="4">
    <location>
        <begin position="146"/>
        <end position="148"/>
    </location>
</feature>
<feature type="strand" evidence="8">
    <location>
        <begin position="153"/>
        <end position="158"/>
    </location>
</feature>
<feature type="helix" evidence="8">
    <location>
        <begin position="163"/>
        <end position="171"/>
    </location>
</feature>
<proteinExistence type="evidence at protein level"/>
<comment type="function">
    <text evidence="1">This is one of the proteins that bind and probably mediate the attachment of the 5S RNA into the large ribosomal subunit, where it forms part of the central protuberance. In the 70S ribosome it contacts protein S13 of the 30S subunit (bridge B1b), connecting the 2 subunits; this bridge is implicated in subunit movement. Contacts the P site tRNA; the 5S rRNA and some of its associated proteins might help stabilize positioning of ribosome-bound tRNAs.</text>
</comment>
<comment type="subunit">
    <text evidence="1">Part of the 50S ribosomal subunit; part of the 5S rRNA/L5/L18/L25 subcomplex. Contacts the 5S rRNA and the P site tRNA. Forms a bridge to the 30S subunit in the 70S ribosome.</text>
</comment>
<comment type="similarity">
    <text evidence="1">Belongs to the universal ribosomal protein uL5 family.</text>
</comment>
<dbReference type="EMBL" id="CP000253">
    <property type="protein sequence ID" value="ABD31518.1"/>
    <property type="molecule type" value="Genomic_DNA"/>
</dbReference>
<dbReference type="RefSeq" id="WP_001080824.1">
    <property type="nucleotide sequence ID" value="NZ_LS483365.1"/>
</dbReference>
<dbReference type="RefSeq" id="YP_500967.1">
    <property type="nucleotide sequence ID" value="NC_007795.1"/>
</dbReference>
<dbReference type="PDB" id="4WCE">
    <property type="method" value="X-ray"/>
    <property type="resolution" value="3.53 A"/>
    <property type="chains" value="D=1-179"/>
</dbReference>
<dbReference type="PDB" id="4WF9">
    <property type="method" value="X-ray"/>
    <property type="resolution" value="3.43 A"/>
    <property type="chains" value="D=1-179"/>
</dbReference>
<dbReference type="PDB" id="4WFA">
    <property type="method" value="X-ray"/>
    <property type="resolution" value="3.39 A"/>
    <property type="chains" value="D=1-179"/>
</dbReference>
<dbReference type="PDB" id="4WFB">
    <property type="method" value="X-ray"/>
    <property type="resolution" value="3.43 A"/>
    <property type="chains" value="D=1-179"/>
</dbReference>
<dbReference type="PDB" id="5HKV">
    <property type="method" value="X-ray"/>
    <property type="resolution" value="3.66 A"/>
    <property type="chains" value="D=1-179"/>
</dbReference>
<dbReference type="PDB" id="5HL7">
    <property type="method" value="X-ray"/>
    <property type="resolution" value="3.55 A"/>
    <property type="chains" value="D=1-179"/>
</dbReference>
<dbReference type="PDB" id="5LI0">
    <property type="method" value="EM"/>
    <property type="resolution" value="3.80 A"/>
    <property type="chains" value="G=5-170"/>
</dbReference>
<dbReference type="PDB" id="5ND8">
    <property type="method" value="EM"/>
    <property type="resolution" value="3.70 A"/>
    <property type="chains" value="G=1-179"/>
</dbReference>
<dbReference type="PDB" id="5ND9">
    <property type="method" value="EM"/>
    <property type="resolution" value="3.70 A"/>
    <property type="chains" value="G=1-179"/>
</dbReference>
<dbReference type="PDB" id="5NRG">
    <property type="method" value="X-ray"/>
    <property type="resolution" value="3.44 A"/>
    <property type="chains" value="D=1-179"/>
</dbReference>
<dbReference type="PDB" id="5TCU">
    <property type="method" value="EM"/>
    <property type="resolution" value="3.90 A"/>
    <property type="chains" value="LK=2-167"/>
</dbReference>
<dbReference type="PDB" id="6HMA">
    <property type="method" value="EM"/>
    <property type="resolution" value="2.65 A"/>
    <property type="chains" value="F=19-176"/>
</dbReference>
<dbReference type="PDB" id="6YEF">
    <property type="method" value="EM"/>
    <property type="resolution" value="3.20 A"/>
    <property type="chains" value="G=1-179"/>
</dbReference>
<dbReference type="PDB" id="7ASM">
    <property type="method" value="EM"/>
    <property type="resolution" value="2.48 A"/>
    <property type="chains" value="F=19-176"/>
</dbReference>
<dbReference type="PDB" id="7NHL">
    <property type="method" value="EM"/>
    <property type="resolution" value="3.10 A"/>
    <property type="chains" value="J=1-179"/>
</dbReference>
<dbReference type="PDB" id="7NHM">
    <property type="method" value="EM"/>
    <property type="resolution" value="3.10 A"/>
    <property type="chains" value="J=1-179"/>
</dbReference>
<dbReference type="PDB" id="8P2F">
    <property type="method" value="EM"/>
    <property type="resolution" value="2.44 A"/>
    <property type="chains" value="J=1-179"/>
</dbReference>
<dbReference type="PDB" id="8P2G">
    <property type="method" value="EM"/>
    <property type="resolution" value="2.02 A"/>
    <property type="chains" value="J=1-179"/>
</dbReference>
<dbReference type="PDB" id="8P2H">
    <property type="method" value="EM"/>
    <property type="resolution" value="2.49 A"/>
    <property type="chains" value="J=1-179"/>
</dbReference>
<dbReference type="PDBsum" id="4WCE"/>
<dbReference type="PDBsum" id="4WF9"/>
<dbReference type="PDBsum" id="4WFA"/>
<dbReference type="PDBsum" id="4WFB"/>
<dbReference type="PDBsum" id="5HKV"/>
<dbReference type="PDBsum" id="5HL7"/>
<dbReference type="PDBsum" id="5LI0"/>
<dbReference type="PDBsum" id="5ND8"/>
<dbReference type="PDBsum" id="5ND9"/>
<dbReference type="PDBsum" id="5NRG"/>
<dbReference type="PDBsum" id="5TCU"/>
<dbReference type="PDBsum" id="6HMA"/>
<dbReference type="PDBsum" id="6YEF"/>
<dbReference type="PDBsum" id="7ASM"/>
<dbReference type="PDBsum" id="7NHL"/>
<dbReference type="PDBsum" id="7NHM"/>
<dbReference type="PDBsum" id="8P2F"/>
<dbReference type="PDBsum" id="8P2G"/>
<dbReference type="PDBsum" id="8P2H"/>
<dbReference type="EMDB" id="EMD-10791"/>
<dbReference type="EMDB" id="EMD-12332"/>
<dbReference type="EMDB" id="EMD-12333"/>
<dbReference type="EMDB" id="EMD-17363"/>
<dbReference type="EMDB" id="EMD-17364"/>
<dbReference type="EMDB" id="EMD-17365"/>
<dbReference type="EMDB" id="EMD-3624"/>
<dbReference type="EMDB" id="EMD-3625"/>
<dbReference type="EMDB" id="EMD-4050"/>
<dbReference type="EMDB" id="EMD-8402"/>
<dbReference type="SMR" id="Q2FW18"/>
<dbReference type="IntAct" id="Q2FW18">
    <property type="interactions" value="1"/>
</dbReference>
<dbReference type="STRING" id="93061.SAOUHSC_02500"/>
<dbReference type="PaxDb" id="1280-SAXN108_2487"/>
<dbReference type="GeneID" id="3920876"/>
<dbReference type="KEGG" id="sao:SAOUHSC_02500"/>
<dbReference type="PATRIC" id="fig|93061.5.peg.2255"/>
<dbReference type="eggNOG" id="COG0094">
    <property type="taxonomic scope" value="Bacteria"/>
</dbReference>
<dbReference type="HOGENOM" id="CLU_061015_2_1_9"/>
<dbReference type="OrthoDB" id="9806626at2"/>
<dbReference type="EvolutionaryTrace" id="Q2FW18"/>
<dbReference type="PRO" id="PR:Q2FW18"/>
<dbReference type="Proteomes" id="UP000008816">
    <property type="component" value="Chromosome"/>
</dbReference>
<dbReference type="GO" id="GO:0022625">
    <property type="term" value="C:cytosolic large ribosomal subunit"/>
    <property type="evidence" value="ECO:0000318"/>
    <property type="project" value="GO_Central"/>
</dbReference>
<dbReference type="GO" id="GO:0003723">
    <property type="term" value="F:RNA binding"/>
    <property type="evidence" value="ECO:0000318"/>
    <property type="project" value="GO_Central"/>
</dbReference>
<dbReference type="GO" id="GO:0019843">
    <property type="term" value="F:rRNA binding"/>
    <property type="evidence" value="ECO:0007669"/>
    <property type="project" value="UniProtKB-UniRule"/>
</dbReference>
<dbReference type="GO" id="GO:0003735">
    <property type="term" value="F:structural constituent of ribosome"/>
    <property type="evidence" value="ECO:0000318"/>
    <property type="project" value="GO_Central"/>
</dbReference>
<dbReference type="GO" id="GO:0000049">
    <property type="term" value="F:tRNA binding"/>
    <property type="evidence" value="ECO:0007669"/>
    <property type="project" value="UniProtKB-UniRule"/>
</dbReference>
<dbReference type="GO" id="GO:0006412">
    <property type="term" value="P:translation"/>
    <property type="evidence" value="ECO:0000318"/>
    <property type="project" value="GO_Central"/>
</dbReference>
<dbReference type="FunFam" id="3.30.1440.10:FF:000001">
    <property type="entry name" value="50S ribosomal protein L5"/>
    <property type="match status" value="1"/>
</dbReference>
<dbReference type="Gene3D" id="3.30.1440.10">
    <property type="match status" value="1"/>
</dbReference>
<dbReference type="HAMAP" id="MF_01333_B">
    <property type="entry name" value="Ribosomal_uL5_B"/>
    <property type="match status" value="1"/>
</dbReference>
<dbReference type="InterPro" id="IPR002132">
    <property type="entry name" value="Ribosomal_uL5"/>
</dbReference>
<dbReference type="InterPro" id="IPR020930">
    <property type="entry name" value="Ribosomal_uL5_bac-type"/>
</dbReference>
<dbReference type="InterPro" id="IPR031309">
    <property type="entry name" value="Ribosomal_uL5_C"/>
</dbReference>
<dbReference type="InterPro" id="IPR020929">
    <property type="entry name" value="Ribosomal_uL5_CS"/>
</dbReference>
<dbReference type="InterPro" id="IPR022803">
    <property type="entry name" value="Ribosomal_uL5_dom_sf"/>
</dbReference>
<dbReference type="InterPro" id="IPR031310">
    <property type="entry name" value="Ribosomal_uL5_N"/>
</dbReference>
<dbReference type="NCBIfam" id="NF000585">
    <property type="entry name" value="PRK00010.1"/>
    <property type="match status" value="1"/>
</dbReference>
<dbReference type="PANTHER" id="PTHR11994">
    <property type="entry name" value="60S RIBOSOMAL PROTEIN L11-RELATED"/>
    <property type="match status" value="1"/>
</dbReference>
<dbReference type="Pfam" id="PF00281">
    <property type="entry name" value="Ribosomal_L5"/>
    <property type="match status" value="1"/>
</dbReference>
<dbReference type="Pfam" id="PF00673">
    <property type="entry name" value="Ribosomal_L5_C"/>
    <property type="match status" value="1"/>
</dbReference>
<dbReference type="PIRSF" id="PIRSF002161">
    <property type="entry name" value="Ribosomal_L5"/>
    <property type="match status" value="1"/>
</dbReference>
<dbReference type="SUPFAM" id="SSF55282">
    <property type="entry name" value="RL5-like"/>
    <property type="match status" value="1"/>
</dbReference>
<dbReference type="PROSITE" id="PS00358">
    <property type="entry name" value="RIBOSOMAL_L5"/>
    <property type="match status" value="1"/>
</dbReference>
<sequence length="179" mass="20267">MNRLKEKFNTEVTENLMKKFNYSSVMEVPKIDKIVVNMGVGDAVQNSKVLDNAVEELELITGQKPLVTKAKKSIATFRLREGMPIGAKVTLRGERMYEFLDKLISVSLPRVRDFQGVSKKAFDGRGNYTLGVKEQLIFPEIDYDKVSKVRGMDIVIVTTANTDEEARELLANFGMPFRK</sequence>
<organism>
    <name type="scientific">Staphylococcus aureus (strain NCTC 8325 / PS 47)</name>
    <dbReference type="NCBI Taxonomy" id="93061"/>
    <lineage>
        <taxon>Bacteria</taxon>
        <taxon>Bacillati</taxon>
        <taxon>Bacillota</taxon>
        <taxon>Bacilli</taxon>
        <taxon>Bacillales</taxon>
        <taxon>Staphylococcaceae</taxon>
        <taxon>Staphylococcus</taxon>
    </lineage>
</organism>
<keyword id="KW-0002">3D-structure</keyword>
<keyword id="KW-1185">Reference proteome</keyword>
<keyword id="KW-0687">Ribonucleoprotein</keyword>
<keyword id="KW-0689">Ribosomal protein</keyword>
<keyword id="KW-0694">RNA-binding</keyword>
<keyword id="KW-0699">rRNA-binding</keyword>
<keyword id="KW-0820">tRNA-binding</keyword>
<accession>Q2FW18</accession>
<gene>
    <name evidence="1" type="primary">rplE</name>
    <name type="ordered locus">SAOUHSC_02500</name>
</gene>